<keyword id="KW-0378">Hydrolase</keyword>
<keyword id="KW-0442">Lipid degradation</keyword>
<keyword id="KW-0443">Lipid metabolism</keyword>
<keyword id="KW-0472">Membrane</keyword>
<keyword id="KW-1185">Reference proteome</keyword>
<keyword id="KW-0677">Repeat</keyword>
<keyword id="KW-0812">Transmembrane</keyword>
<keyword id="KW-1133">Transmembrane helix</keyword>
<comment type="subcellular location">
    <subcellularLocation>
        <location evidence="6">Membrane</location>
        <topology evidence="6">Single-pass membrane protein</topology>
    </subcellularLocation>
</comment>
<comment type="similarity">
    <text evidence="6">Belongs to the NTE family.</text>
</comment>
<name>PLPL6_CAEEL</name>
<proteinExistence type="inferred from homology"/>
<organism>
    <name type="scientific">Caenorhabditis elegans</name>
    <dbReference type="NCBI Taxonomy" id="6239"/>
    <lineage>
        <taxon>Eukaryota</taxon>
        <taxon>Metazoa</taxon>
        <taxon>Ecdysozoa</taxon>
        <taxon>Nematoda</taxon>
        <taxon>Chromadorea</taxon>
        <taxon>Rhabditida</taxon>
        <taxon>Rhabditina</taxon>
        <taxon>Rhabditomorpha</taxon>
        <taxon>Rhabditoidea</taxon>
        <taxon>Rhabditidae</taxon>
        <taxon>Peloderinae</taxon>
        <taxon>Caenorhabditis</taxon>
    </lineage>
</organism>
<gene>
    <name evidence="7" type="ORF">M110.7</name>
</gene>
<protein>
    <recommendedName>
        <fullName evidence="6">Putative patatin-like phospholipase domain-containing protein M110.7</fullName>
        <ecNumber evidence="1">3.1.1.-</ecNumber>
    </recommendedName>
</protein>
<accession>Q21534</accession>
<accession>Q20023</accession>
<dbReference type="EC" id="3.1.1.-" evidence="1"/>
<dbReference type="EMBL" id="BX284602">
    <property type="protein sequence ID" value="CAA90264.3"/>
    <property type="molecule type" value="Genomic_DNA"/>
</dbReference>
<dbReference type="EMBL" id="Z49966">
    <property type="protein sequence ID" value="CAA90264.3"/>
    <property type="status" value="JOINED"/>
    <property type="molecule type" value="Genomic_DNA"/>
</dbReference>
<dbReference type="PIR" id="T21745">
    <property type="entry name" value="T21745"/>
</dbReference>
<dbReference type="RefSeq" id="NP_495734.3">
    <property type="nucleotide sequence ID" value="NM_063333.4"/>
</dbReference>
<dbReference type="SMR" id="Q21534"/>
<dbReference type="FunCoup" id="Q21534">
    <property type="interactions" value="971"/>
</dbReference>
<dbReference type="STRING" id="6239.M110.7.1"/>
<dbReference type="PaxDb" id="6239-M110.7"/>
<dbReference type="EnsemblMetazoa" id="M110.7.1">
    <property type="protein sequence ID" value="M110.7.1"/>
    <property type="gene ID" value="WBGene00010915"/>
</dbReference>
<dbReference type="GeneID" id="187474"/>
<dbReference type="KEGG" id="cel:CELE_M110.7"/>
<dbReference type="UCSC" id="M110.7">
    <property type="organism name" value="c. elegans"/>
</dbReference>
<dbReference type="AGR" id="WB:WBGene00010915"/>
<dbReference type="CTD" id="187474"/>
<dbReference type="WormBase" id="M110.7">
    <property type="protein sequence ID" value="CE43244"/>
    <property type="gene ID" value="WBGene00010915"/>
</dbReference>
<dbReference type="eggNOG" id="KOG2968">
    <property type="taxonomic scope" value="Eukaryota"/>
</dbReference>
<dbReference type="HOGENOM" id="CLU_000960_1_0_1"/>
<dbReference type="InParanoid" id="Q21534"/>
<dbReference type="OMA" id="CTLITCN"/>
<dbReference type="OrthoDB" id="421051at2759"/>
<dbReference type="PhylomeDB" id="Q21534"/>
<dbReference type="Reactome" id="R-CEL-6814848">
    <property type="pathway name" value="Glycerophospholipid catabolism"/>
</dbReference>
<dbReference type="PRO" id="PR:Q21534"/>
<dbReference type="Proteomes" id="UP000001940">
    <property type="component" value="Chromosome II"/>
</dbReference>
<dbReference type="Bgee" id="WBGene00010915">
    <property type="expression patterns" value="Expressed in adult organism and 1 other cell type or tissue"/>
</dbReference>
<dbReference type="GO" id="GO:0005783">
    <property type="term" value="C:endoplasmic reticulum"/>
    <property type="evidence" value="ECO:0000318"/>
    <property type="project" value="GO_Central"/>
</dbReference>
<dbReference type="GO" id="GO:0016020">
    <property type="term" value="C:membrane"/>
    <property type="evidence" value="ECO:0007669"/>
    <property type="project" value="UniProtKB-SubCell"/>
</dbReference>
<dbReference type="GO" id="GO:0004622">
    <property type="term" value="F:lysophospholipase activity"/>
    <property type="evidence" value="ECO:0000318"/>
    <property type="project" value="GO_Central"/>
</dbReference>
<dbReference type="GO" id="GO:0016042">
    <property type="term" value="P:lipid catabolic process"/>
    <property type="evidence" value="ECO:0007669"/>
    <property type="project" value="UniProtKB-KW"/>
</dbReference>
<dbReference type="GO" id="GO:0046470">
    <property type="term" value="P:phosphatidylcholine metabolic process"/>
    <property type="evidence" value="ECO:0007669"/>
    <property type="project" value="InterPro"/>
</dbReference>
<dbReference type="CDD" id="cd00038">
    <property type="entry name" value="CAP_ED"/>
    <property type="match status" value="2"/>
</dbReference>
<dbReference type="FunFam" id="2.60.120.10:FF:000437">
    <property type="entry name" value="Uncharacterized NTE family protein M110.7"/>
    <property type="match status" value="1"/>
</dbReference>
<dbReference type="FunFam" id="3.40.1090.10:FF:000062">
    <property type="entry name" value="Uncharacterized NTE family protein M110.7"/>
    <property type="match status" value="1"/>
</dbReference>
<dbReference type="FunFam" id="3.40.1090.10:FF:000063">
    <property type="entry name" value="Uncharacterized NTE family protein M110.7"/>
    <property type="match status" value="1"/>
</dbReference>
<dbReference type="Gene3D" id="3.40.1090.10">
    <property type="entry name" value="Cytosolic phospholipase A2 catalytic domain"/>
    <property type="match status" value="2"/>
</dbReference>
<dbReference type="Gene3D" id="2.60.120.10">
    <property type="entry name" value="Jelly Rolls"/>
    <property type="match status" value="3"/>
</dbReference>
<dbReference type="InterPro" id="IPR016035">
    <property type="entry name" value="Acyl_Trfase/lysoPLipase"/>
</dbReference>
<dbReference type="InterPro" id="IPR000595">
    <property type="entry name" value="cNMP-bd_dom"/>
</dbReference>
<dbReference type="InterPro" id="IPR018490">
    <property type="entry name" value="cNMP-bd_dom_sf"/>
</dbReference>
<dbReference type="InterPro" id="IPR001423">
    <property type="entry name" value="LysoPLipase_patatin_CS"/>
</dbReference>
<dbReference type="InterPro" id="IPR050301">
    <property type="entry name" value="NTE"/>
</dbReference>
<dbReference type="InterPro" id="IPR056556">
    <property type="entry name" value="NTE1_P-loop_dom"/>
</dbReference>
<dbReference type="InterPro" id="IPR002641">
    <property type="entry name" value="PNPLA_dom"/>
</dbReference>
<dbReference type="InterPro" id="IPR014710">
    <property type="entry name" value="RmlC-like_jellyroll"/>
</dbReference>
<dbReference type="PANTHER" id="PTHR14226">
    <property type="entry name" value="NEUROPATHY TARGET ESTERASE/SWISS CHEESE D.MELANOGASTER"/>
    <property type="match status" value="1"/>
</dbReference>
<dbReference type="PANTHER" id="PTHR14226:SF21">
    <property type="entry name" value="PATATIN-LIKE PHOSPHOLIPASE DOMAIN-CONTAINING PROTEIN M110.7-RELATED"/>
    <property type="match status" value="1"/>
</dbReference>
<dbReference type="Pfam" id="PF00027">
    <property type="entry name" value="cNMP_binding"/>
    <property type="match status" value="1"/>
</dbReference>
<dbReference type="Pfam" id="PF24179">
    <property type="entry name" value="NTE_Ploop"/>
    <property type="match status" value="1"/>
</dbReference>
<dbReference type="Pfam" id="PF01734">
    <property type="entry name" value="Patatin"/>
    <property type="match status" value="1"/>
</dbReference>
<dbReference type="SMART" id="SM00100">
    <property type="entry name" value="cNMP"/>
    <property type="match status" value="3"/>
</dbReference>
<dbReference type="SUPFAM" id="SSF51206">
    <property type="entry name" value="cAMP-binding domain-like"/>
    <property type="match status" value="3"/>
</dbReference>
<dbReference type="SUPFAM" id="SSF52151">
    <property type="entry name" value="FabD/lysophospholipase-like"/>
    <property type="match status" value="1"/>
</dbReference>
<dbReference type="PROSITE" id="PS50042">
    <property type="entry name" value="CNMP_BINDING_3"/>
    <property type="match status" value="1"/>
</dbReference>
<dbReference type="PROSITE" id="PS51635">
    <property type="entry name" value="PNPLA"/>
    <property type="match status" value="1"/>
</dbReference>
<dbReference type="PROSITE" id="PS01237">
    <property type="entry name" value="UPF0028"/>
    <property type="match status" value="1"/>
</dbReference>
<evidence type="ECO:0000250" key="1">
    <source>
        <dbReference type="UniProtKB" id="Q3TRM4"/>
    </source>
</evidence>
<evidence type="ECO:0000255" key="2"/>
<evidence type="ECO:0000255" key="3">
    <source>
        <dbReference type="PROSITE-ProRule" id="PRU00060"/>
    </source>
</evidence>
<evidence type="ECO:0000255" key="4">
    <source>
        <dbReference type="PROSITE-ProRule" id="PRU01161"/>
    </source>
</evidence>
<evidence type="ECO:0000256" key="5">
    <source>
        <dbReference type="SAM" id="MobiDB-lite"/>
    </source>
</evidence>
<evidence type="ECO:0000305" key="6"/>
<evidence type="ECO:0000312" key="7">
    <source>
        <dbReference type="WormBase" id="M110.7"/>
    </source>
</evidence>
<sequence>MLHYLLSVLLLIFENILELCMCITLVILIYYFWPSKQLEDATLQYFPDTTQNSSEVFIDPPERNPIFYPISPLRHKKRSSKEEMTPDKKRDSSEKISKQPPRELFEPNEQEQVPSHIKPEIFFVLKALEGLELPTTWQLDPKDVETLSIDTGSVVLSPGRANDVIVVVISGELGIFTNVSLGDKRYDCNIKTLRSGESYFSQTSIIEILMNEKPNNKYIHLKALTSCRVATYHLTSFHTSFIANPQQWIRTIQVVMTRLQQCTLITCNMYLGIGGKCLNAKRKLPDSGKFKDFNKLTEAEQLNKGVEAIAQAMGIPDQSDKLREKVRKYECQAGTVVTEENSFEIDMIFVVFGKLRLKRGDLEHDDTGTSLTFDVYPGDMLPSMQILTNEPAMCSAKALEKTIYFKICRDEYIQFLFAHPVIYLRLAFHALQFISPFARVFDMAVHWHRIETGQALFRQGDKSDSMHIVMGGRLRAVDSTKIIEEYGRLDLIGITDMAEKRPRRNTVMAVRFSHIVCIPENLLSFVKIRYPQVGNKLLKLISKCWKAPTPETMSHVETTRNQNLRTIAIVPASRRVPLTEFTCELYNQLSKHVKTLRLSSSVVENYFESEVITKKADYGLMHWLNVQEIAYSLVLYQCDFHKTNWTRRCLRMADAILMVALGTESKEEQVLAEALLSCNEKGVRQSKELVFLWPIDTPTPSGTAAWIKESYYSGYHHLRAPNRLFSFPLKTREKKIVEYYETTVYGEISYQSDFSRLARILTGNAIGIVFGGGGARGAAHAGALRALIEKKVQIDMVGGTSIGALFGSLYATTPDIRAVGRMKDFFTDRLRNNILDVVRDLTWPYCGILTGHRFNLCVQRMLNDVNIEDCWVSFFCITTDLTSSSMRIHRNGIMWPVVRSSMSIAGYVPPICDPQDGHLLLDGAYVNNLPADIMRSLGANVVIAIDVGMSDDNTNLRNYGFSISGTWCLFKRWWPFGEELRVLNMNEVQNRLAYVCCVNQMEIVKNAQYCYYVKLPIESFGIFDFSKFDQAAQIGYDITKQKMEEFFEDSVATRRKLLGCARNVRQTPQKSKNDNILSFVNMPVLPKPPSDIKSD</sequence>
<reference key="1">
    <citation type="journal article" date="1998" name="Science">
        <title>Genome sequence of the nematode C. elegans: a platform for investigating biology.</title>
        <authorList>
            <consortium name="The C. elegans sequencing consortium"/>
        </authorList>
    </citation>
    <scope>NUCLEOTIDE SEQUENCE [LARGE SCALE GENOMIC DNA]</scope>
    <source>
        <strain>Bristol N2</strain>
    </source>
</reference>
<feature type="chain" id="PRO_0000172530" description="Putative patatin-like phospholipase domain-containing protein M110.7">
    <location>
        <begin position="1"/>
        <end position="1095"/>
    </location>
</feature>
<feature type="transmembrane region" description="Helical" evidence="2">
    <location>
        <begin position="9"/>
        <end position="29"/>
    </location>
</feature>
<feature type="domain" description="PNPLA" evidence="4">
    <location>
        <begin position="768"/>
        <end position="935"/>
    </location>
</feature>
<feature type="region of interest" description="Disordered" evidence="5">
    <location>
        <begin position="75"/>
        <end position="113"/>
    </location>
</feature>
<feature type="short sequence motif" description="GXGXXG" evidence="4">
    <location>
        <begin position="772"/>
        <end position="777"/>
    </location>
</feature>
<feature type="short sequence motif" description="GXSXG" evidence="4">
    <location>
        <begin position="799"/>
        <end position="803"/>
    </location>
</feature>
<feature type="short sequence motif" description="DGA/G" evidence="4">
    <location>
        <begin position="922"/>
        <end position="924"/>
    </location>
</feature>
<feature type="compositionally biased region" description="Basic and acidic residues" evidence="5">
    <location>
        <begin position="80"/>
        <end position="105"/>
    </location>
</feature>
<feature type="active site" description="Nucleophile" evidence="4">
    <location>
        <position position="801"/>
    </location>
</feature>
<feature type="active site" description="Proton acceptor" evidence="4">
    <location>
        <position position="922"/>
    </location>
</feature>
<feature type="binding site" evidence="3">
    <location>
        <begin position="144"/>
        <end position="237"/>
    </location>
    <ligand>
        <name>a nucleoside 3',5'-cyclic phosphate</name>
        <dbReference type="ChEBI" id="CHEBI:58464"/>
        <label>1</label>
    </ligand>
</feature>
<feature type="binding site" evidence="3">
    <location>
        <begin position="327"/>
        <end position="416"/>
    </location>
    <ligand>
        <name>a nucleoside 3',5'-cyclic phosphate</name>
        <dbReference type="ChEBI" id="CHEBI:58464"/>
        <label>2</label>
    </ligand>
</feature>
<feature type="binding site" evidence="3">
    <location>
        <begin position="450"/>
        <end position="509"/>
    </location>
    <ligand>
        <name>a nucleoside 3',5'-cyclic phosphate</name>
        <dbReference type="ChEBI" id="CHEBI:58464"/>
        <label>3</label>
    </ligand>
</feature>